<evidence type="ECO:0000255" key="1">
    <source>
        <dbReference type="HAMAP-Rule" id="MF_00549"/>
    </source>
</evidence>
<proteinExistence type="inferred from homology"/>
<dbReference type="EC" id="4.2.3.3" evidence="1"/>
<dbReference type="EMBL" id="CP001127">
    <property type="protein sequence ID" value="ACF91571.1"/>
    <property type="molecule type" value="Genomic_DNA"/>
</dbReference>
<dbReference type="RefSeq" id="WP_000424187.1">
    <property type="nucleotide sequence ID" value="NC_011094.1"/>
</dbReference>
<dbReference type="SMR" id="B4TSI9"/>
<dbReference type="KEGG" id="sew:SeSA_A1139"/>
<dbReference type="HOGENOM" id="CLU_120420_0_1_6"/>
<dbReference type="Proteomes" id="UP000001865">
    <property type="component" value="Chromosome"/>
</dbReference>
<dbReference type="GO" id="GO:0005829">
    <property type="term" value="C:cytosol"/>
    <property type="evidence" value="ECO:0007669"/>
    <property type="project" value="TreeGrafter"/>
</dbReference>
<dbReference type="GO" id="GO:0008929">
    <property type="term" value="F:methylglyoxal synthase activity"/>
    <property type="evidence" value="ECO:0007669"/>
    <property type="project" value="UniProtKB-UniRule"/>
</dbReference>
<dbReference type="GO" id="GO:0019242">
    <property type="term" value="P:methylglyoxal biosynthetic process"/>
    <property type="evidence" value="ECO:0007669"/>
    <property type="project" value="UniProtKB-UniRule"/>
</dbReference>
<dbReference type="CDD" id="cd01422">
    <property type="entry name" value="MGS"/>
    <property type="match status" value="1"/>
</dbReference>
<dbReference type="FunFam" id="3.40.50.1380:FF:000002">
    <property type="entry name" value="Methylglyoxal synthase"/>
    <property type="match status" value="1"/>
</dbReference>
<dbReference type="Gene3D" id="3.40.50.1380">
    <property type="entry name" value="Methylglyoxal synthase-like domain"/>
    <property type="match status" value="1"/>
</dbReference>
<dbReference type="HAMAP" id="MF_00549">
    <property type="entry name" value="Methylglyoxal_synth"/>
    <property type="match status" value="1"/>
</dbReference>
<dbReference type="InterPro" id="IPR004363">
    <property type="entry name" value="Methylgl_synth"/>
</dbReference>
<dbReference type="InterPro" id="IPR018148">
    <property type="entry name" value="Methylglyoxal_synth_AS"/>
</dbReference>
<dbReference type="InterPro" id="IPR011607">
    <property type="entry name" value="MGS-like_dom"/>
</dbReference>
<dbReference type="InterPro" id="IPR036914">
    <property type="entry name" value="MGS-like_dom_sf"/>
</dbReference>
<dbReference type="NCBIfam" id="TIGR00160">
    <property type="entry name" value="MGSA"/>
    <property type="match status" value="1"/>
</dbReference>
<dbReference type="NCBIfam" id="NF003559">
    <property type="entry name" value="PRK05234.1"/>
    <property type="match status" value="1"/>
</dbReference>
<dbReference type="PANTHER" id="PTHR30492">
    <property type="entry name" value="METHYLGLYOXAL SYNTHASE"/>
    <property type="match status" value="1"/>
</dbReference>
<dbReference type="PANTHER" id="PTHR30492:SF0">
    <property type="entry name" value="METHYLGLYOXAL SYNTHASE"/>
    <property type="match status" value="1"/>
</dbReference>
<dbReference type="Pfam" id="PF02142">
    <property type="entry name" value="MGS"/>
    <property type="match status" value="1"/>
</dbReference>
<dbReference type="PIRSF" id="PIRSF006614">
    <property type="entry name" value="Methylglyox_syn"/>
    <property type="match status" value="1"/>
</dbReference>
<dbReference type="SMART" id="SM00851">
    <property type="entry name" value="MGS"/>
    <property type="match status" value="1"/>
</dbReference>
<dbReference type="SUPFAM" id="SSF52335">
    <property type="entry name" value="Methylglyoxal synthase-like"/>
    <property type="match status" value="1"/>
</dbReference>
<dbReference type="PROSITE" id="PS01335">
    <property type="entry name" value="METHYLGLYOXAL_SYNTH"/>
    <property type="match status" value="1"/>
</dbReference>
<dbReference type="PROSITE" id="PS51855">
    <property type="entry name" value="MGS"/>
    <property type="match status" value="1"/>
</dbReference>
<keyword id="KW-0456">Lyase</keyword>
<accession>B4TSI9</accession>
<gene>
    <name evidence="1" type="primary">mgsA</name>
    <name type="ordered locus">SeSA_A1139</name>
</gene>
<reference key="1">
    <citation type="journal article" date="2011" name="J. Bacteriol.">
        <title>Comparative genomics of 28 Salmonella enterica isolates: evidence for CRISPR-mediated adaptive sublineage evolution.</title>
        <authorList>
            <person name="Fricke W.F."/>
            <person name="Mammel M.K."/>
            <person name="McDermott P.F."/>
            <person name="Tartera C."/>
            <person name="White D.G."/>
            <person name="Leclerc J.E."/>
            <person name="Ravel J."/>
            <person name="Cebula T.A."/>
        </authorList>
    </citation>
    <scope>NUCLEOTIDE SEQUENCE [LARGE SCALE GENOMIC DNA]</scope>
    <source>
        <strain>CVM19633</strain>
    </source>
</reference>
<sequence>MELTTRTLPTRKHIALVAHDHCKQMLMNWVERHQPLLEKHVLYATGTTGNLIQRATGMDVNAMLSGPMGGDQQVGALISEGKIDVLIFFWDPLNAVPHDPDVKALLRLATVWNIPVATNVSTADFIIQSPHFNDAVDILIPDYARYLAERLK</sequence>
<comment type="function">
    <text evidence="1">Catalyzes the formation of methylglyoxal from dihydroxyacetone phosphate.</text>
</comment>
<comment type="catalytic activity">
    <reaction evidence="1">
        <text>dihydroxyacetone phosphate = methylglyoxal + phosphate</text>
        <dbReference type="Rhea" id="RHEA:17937"/>
        <dbReference type="ChEBI" id="CHEBI:17158"/>
        <dbReference type="ChEBI" id="CHEBI:43474"/>
        <dbReference type="ChEBI" id="CHEBI:57642"/>
        <dbReference type="EC" id="4.2.3.3"/>
    </reaction>
</comment>
<comment type="similarity">
    <text evidence="1">Belongs to the methylglyoxal synthase family.</text>
</comment>
<name>MGSA_SALSV</name>
<feature type="chain" id="PRO_1000129009" description="Methylglyoxal synthase">
    <location>
        <begin position="1"/>
        <end position="152"/>
    </location>
</feature>
<feature type="domain" description="MGS-like" evidence="1">
    <location>
        <begin position="6"/>
        <end position="152"/>
    </location>
</feature>
<feature type="active site" description="Proton donor/acceptor" evidence="1">
    <location>
        <position position="71"/>
    </location>
</feature>
<feature type="binding site" evidence="1">
    <location>
        <position position="19"/>
    </location>
    <ligand>
        <name>substrate</name>
    </ligand>
</feature>
<feature type="binding site" evidence="1">
    <location>
        <position position="23"/>
    </location>
    <ligand>
        <name>substrate</name>
    </ligand>
</feature>
<feature type="binding site" evidence="1">
    <location>
        <begin position="45"/>
        <end position="48"/>
    </location>
    <ligand>
        <name>substrate</name>
    </ligand>
</feature>
<feature type="binding site" evidence="1">
    <location>
        <begin position="65"/>
        <end position="66"/>
    </location>
    <ligand>
        <name>substrate</name>
    </ligand>
</feature>
<feature type="binding site" evidence="1">
    <location>
        <position position="98"/>
    </location>
    <ligand>
        <name>substrate</name>
    </ligand>
</feature>
<organism>
    <name type="scientific">Salmonella schwarzengrund (strain CVM19633)</name>
    <dbReference type="NCBI Taxonomy" id="439843"/>
    <lineage>
        <taxon>Bacteria</taxon>
        <taxon>Pseudomonadati</taxon>
        <taxon>Pseudomonadota</taxon>
        <taxon>Gammaproteobacteria</taxon>
        <taxon>Enterobacterales</taxon>
        <taxon>Enterobacteriaceae</taxon>
        <taxon>Salmonella</taxon>
    </lineage>
</organism>
<protein>
    <recommendedName>
        <fullName evidence="1">Methylglyoxal synthase</fullName>
        <shortName evidence="1">MGS</shortName>
        <ecNumber evidence="1">4.2.3.3</ecNumber>
    </recommendedName>
</protein>